<comment type="function">
    <text evidence="1">Responsible for the deacetylation of lysine residues on the N-terminal part of the core histones (H2A, H2B, H3 and H4). Histone deacetylation gives a tag for epigenetic repression and plays an important role in transcriptional regulation, cell cycle progression and developmental events. Histone deacetylases act via the formation of large multiprotein complexes (By similarity).</text>
</comment>
<comment type="catalytic activity">
    <reaction evidence="3">
        <text>N(6)-acetyl-L-lysyl-[histone] + H2O = L-lysyl-[histone] + acetate</text>
        <dbReference type="Rhea" id="RHEA:58196"/>
        <dbReference type="Rhea" id="RHEA-COMP:9845"/>
        <dbReference type="Rhea" id="RHEA-COMP:11338"/>
        <dbReference type="ChEBI" id="CHEBI:15377"/>
        <dbReference type="ChEBI" id="CHEBI:29969"/>
        <dbReference type="ChEBI" id="CHEBI:30089"/>
        <dbReference type="ChEBI" id="CHEBI:61930"/>
        <dbReference type="EC" id="3.5.1.98"/>
    </reaction>
</comment>
<comment type="subunit">
    <text evidence="3">Homodimer.</text>
</comment>
<comment type="subcellular location">
    <subcellularLocation>
        <location evidence="3">Nucleus</location>
    </subcellularLocation>
</comment>
<comment type="miscellaneous">
    <text evidence="4">Present with 4420 molecules/cell in log phase SD medium.</text>
</comment>
<comment type="similarity">
    <text evidence="5">Belongs to the histone deacetylase family. HD type 1 subfamily.</text>
</comment>
<feature type="chain" id="PRO_0000114727" description="Histone deacetylase HOS3">
    <location>
        <begin position="1"/>
        <end position="697"/>
    </location>
</feature>
<feature type="region of interest" description="Histone deacetylase">
    <location>
        <begin position="40"/>
        <end position="440"/>
    </location>
</feature>
<feature type="region of interest" description="Disordered" evidence="2">
    <location>
        <begin position="525"/>
        <end position="573"/>
    </location>
</feature>
<feature type="region of interest" description="Disordered" evidence="2">
    <location>
        <begin position="625"/>
        <end position="697"/>
    </location>
</feature>
<feature type="compositionally biased region" description="Basic and acidic residues" evidence="2">
    <location>
        <begin position="534"/>
        <end position="560"/>
    </location>
</feature>
<feature type="compositionally biased region" description="Polar residues" evidence="2">
    <location>
        <begin position="561"/>
        <end position="573"/>
    </location>
</feature>
<feature type="compositionally biased region" description="Basic and acidic residues" evidence="2">
    <location>
        <begin position="625"/>
        <end position="638"/>
    </location>
</feature>
<feature type="compositionally biased region" description="Polar residues" evidence="2">
    <location>
        <begin position="665"/>
        <end position="674"/>
    </location>
</feature>
<feature type="active site" evidence="1">
    <location>
        <position position="196"/>
    </location>
</feature>
<feature type="modified residue" description="Phosphoserine" evidence="8">
    <location>
        <position position="582"/>
    </location>
</feature>
<feature type="modified residue" description="Phosphoserine" evidence="8">
    <location>
        <position position="583"/>
    </location>
</feature>
<feature type="modified residue" description="Phosphoserine" evidence="8">
    <location>
        <position position="613"/>
    </location>
</feature>
<feature type="modified residue" description="Phosphoserine" evidence="6 7">
    <location>
        <position position="629"/>
    </location>
</feature>
<feature type="helix" evidence="9">
    <location>
        <begin position="38"/>
        <end position="40"/>
    </location>
</feature>
<feature type="strand" evidence="9">
    <location>
        <begin position="41"/>
        <end position="46"/>
    </location>
</feature>
<feature type="helix" evidence="9">
    <location>
        <begin position="48"/>
        <end position="52"/>
    </location>
</feature>
<feature type="helix" evidence="9">
    <location>
        <begin position="64"/>
        <end position="67"/>
    </location>
</feature>
<feature type="helix" evidence="9">
    <location>
        <begin position="73"/>
        <end position="88"/>
    </location>
</feature>
<feature type="strand" evidence="9">
    <location>
        <begin position="92"/>
        <end position="97"/>
    </location>
</feature>
<feature type="helix" evidence="9">
    <location>
        <begin position="108"/>
        <end position="114"/>
    </location>
</feature>
<feature type="helix" evidence="9">
    <location>
        <begin position="117"/>
        <end position="134"/>
    </location>
</feature>
<feature type="helix" evidence="9">
    <location>
        <begin position="146"/>
        <end position="148"/>
    </location>
</feature>
<feature type="helix" evidence="9">
    <location>
        <begin position="155"/>
        <end position="174"/>
    </location>
</feature>
<feature type="helix" evidence="9">
    <location>
        <begin position="179"/>
        <end position="181"/>
    </location>
</feature>
<feature type="strand" evidence="9">
    <location>
        <begin position="185"/>
        <end position="189"/>
    </location>
</feature>
<feature type="strand" evidence="9">
    <location>
        <begin position="206"/>
        <end position="208"/>
    </location>
</feature>
<feature type="helix" evidence="9">
    <location>
        <begin position="210"/>
        <end position="222"/>
    </location>
</feature>
<feature type="strand" evidence="9">
    <location>
        <begin position="226"/>
        <end position="231"/>
    </location>
</feature>
<feature type="strand" evidence="9">
    <location>
        <begin position="233"/>
        <end position="235"/>
    </location>
</feature>
<feature type="helix" evidence="9">
    <location>
        <begin position="238"/>
        <end position="247"/>
    </location>
</feature>
<feature type="strand" evidence="9">
    <location>
        <begin position="271"/>
        <end position="280"/>
    </location>
</feature>
<feature type="helix" evidence="9">
    <location>
        <begin position="294"/>
        <end position="299"/>
    </location>
</feature>
<feature type="strand" evidence="9">
    <location>
        <begin position="303"/>
        <end position="307"/>
    </location>
</feature>
<feature type="strand" evidence="9">
    <location>
        <begin position="310"/>
        <end position="316"/>
    </location>
</feature>
<feature type="helix" evidence="9">
    <location>
        <begin position="323"/>
        <end position="332"/>
    </location>
</feature>
<feature type="turn" evidence="9">
    <location>
        <begin position="333"/>
        <end position="335"/>
    </location>
</feature>
<feature type="helix" evidence="9">
    <location>
        <begin position="336"/>
        <end position="354"/>
    </location>
</feature>
<feature type="strand" evidence="9">
    <location>
        <begin position="361"/>
        <end position="367"/>
    </location>
</feature>
<feature type="helix" evidence="9">
    <location>
        <begin position="389"/>
        <end position="405"/>
    </location>
</feature>
<feature type="strand" evidence="9">
    <location>
        <begin position="410"/>
        <end position="414"/>
    </location>
</feature>
<feature type="helix" evidence="9">
    <location>
        <begin position="420"/>
        <end position="434"/>
    </location>
</feature>
<feature type="helix" evidence="9">
    <location>
        <begin position="441"/>
        <end position="444"/>
    </location>
</feature>
<feature type="helix" evidence="9">
    <location>
        <begin position="446"/>
        <end position="453"/>
    </location>
</feature>
<feature type="helix" evidence="9">
    <location>
        <begin position="454"/>
        <end position="456"/>
    </location>
</feature>
<feature type="helix" evidence="9">
    <location>
        <begin position="471"/>
        <end position="485"/>
    </location>
</feature>
<feature type="helix" evidence="9">
    <location>
        <begin position="490"/>
        <end position="493"/>
    </location>
</feature>
<proteinExistence type="evidence at protein level"/>
<evidence type="ECO:0000250" key="1"/>
<evidence type="ECO:0000256" key="2">
    <source>
        <dbReference type="SAM" id="MobiDB-lite"/>
    </source>
</evidence>
<evidence type="ECO:0000269" key="3">
    <source>
    </source>
</evidence>
<evidence type="ECO:0000269" key="4">
    <source>
    </source>
</evidence>
<evidence type="ECO:0000305" key="5"/>
<evidence type="ECO:0007744" key="6">
    <source>
    </source>
</evidence>
<evidence type="ECO:0007744" key="7">
    <source>
    </source>
</evidence>
<evidence type="ECO:0007744" key="8">
    <source>
    </source>
</evidence>
<evidence type="ECO:0007829" key="9">
    <source>
        <dbReference type="PDB" id="7WJL"/>
    </source>
</evidence>
<reference key="1">
    <citation type="journal article" date="1997" name="Nature">
        <title>The nucleotide sequence of Saccharomyces cerevisiae chromosome XVI.</title>
        <authorList>
            <person name="Bussey H."/>
            <person name="Storms R.K."/>
            <person name="Ahmed A."/>
            <person name="Albermann K."/>
            <person name="Allen E."/>
            <person name="Ansorge W."/>
            <person name="Araujo R."/>
            <person name="Aparicio A."/>
            <person name="Barrell B.G."/>
            <person name="Badcock K."/>
            <person name="Benes V."/>
            <person name="Botstein D."/>
            <person name="Bowman S."/>
            <person name="Brueckner M."/>
            <person name="Carpenter J."/>
            <person name="Cherry J.M."/>
            <person name="Chung E."/>
            <person name="Churcher C.M."/>
            <person name="Coster F."/>
            <person name="Davis K."/>
            <person name="Davis R.W."/>
            <person name="Dietrich F.S."/>
            <person name="Delius H."/>
            <person name="DiPaolo T."/>
            <person name="Dubois E."/>
            <person name="Duesterhoeft A."/>
            <person name="Duncan M."/>
            <person name="Floeth M."/>
            <person name="Fortin N."/>
            <person name="Friesen J.D."/>
            <person name="Fritz C."/>
            <person name="Goffeau A."/>
            <person name="Hall J."/>
            <person name="Hebling U."/>
            <person name="Heumann K."/>
            <person name="Hilbert H."/>
            <person name="Hillier L.W."/>
            <person name="Hunicke-Smith S."/>
            <person name="Hyman R.W."/>
            <person name="Johnston M."/>
            <person name="Kalman S."/>
            <person name="Kleine K."/>
            <person name="Komp C."/>
            <person name="Kurdi O."/>
            <person name="Lashkari D."/>
            <person name="Lew H."/>
            <person name="Lin A."/>
            <person name="Lin D."/>
            <person name="Louis E.J."/>
            <person name="Marathe R."/>
            <person name="Messenguy F."/>
            <person name="Mewes H.-W."/>
            <person name="Mirtipati S."/>
            <person name="Moestl D."/>
            <person name="Mueller-Auer S."/>
            <person name="Namath A."/>
            <person name="Nentwich U."/>
            <person name="Oefner P."/>
            <person name="Pearson D."/>
            <person name="Petel F.X."/>
            <person name="Pohl T.M."/>
            <person name="Purnelle B."/>
            <person name="Rajandream M.A."/>
            <person name="Rechmann S."/>
            <person name="Rieger M."/>
            <person name="Riles L."/>
            <person name="Roberts D."/>
            <person name="Schaefer M."/>
            <person name="Scharfe M."/>
            <person name="Scherens B."/>
            <person name="Schramm S."/>
            <person name="Schroeder M."/>
            <person name="Sdicu A.-M."/>
            <person name="Tettelin H."/>
            <person name="Urrestarazu L.A."/>
            <person name="Ushinsky S."/>
            <person name="Vierendeels F."/>
            <person name="Vissers S."/>
            <person name="Voss H."/>
            <person name="Walsh S.V."/>
            <person name="Wambutt R."/>
            <person name="Wang Y."/>
            <person name="Wedler E."/>
            <person name="Wedler H."/>
            <person name="Winnett E."/>
            <person name="Zhong W.-W."/>
            <person name="Zollner A."/>
            <person name="Vo D.H."/>
            <person name="Hani J."/>
        </authorList>
    </citation>
    <scope>NUCLEOTIDE SEQUENCE [LARGE SCALE GENOMIC DNA]</scope>
    <source>
        <strain>ATCC 204508 / S288c</strain>
    </source>
</reference>
<reference key="2">
    <citation type="journal article" date="2014" name="G3 (Bethesda)">
        <title>The reference genome sequence of Saccharomyces cerevisiae: Then and now.</title>
        <authorList>
            <person name="Engel S.R."/>
            <person name="Dietrich F.S."/>
            <person name="Fisk D.G."/>
            <person name="Binkley G."/>
            <person name="Balakrishnan R."/>
            <person name="Costanzo M.C."/>
            <person name="Dwight S.S."/>
            <person name="Hitz B.C."/>
            <person name="Karra K."/>
            <person name="Nash R.S."/>
            <person name="Weng S."/>
            <person name="Wong E.D."/>
            <person name="Lloyd P."/>
            <person name="Skrzypek M.S."/>
            <person name="Miyasato S.R."/>
            <person name="Simison M."/>
            <person name="Cherry J.M."/>
        </authorList>
    </citation>
    <scope>GENOME REANNOTATION</scope>
    <source>
        <strain>ATCC 204508 / S288c</strain>
    </source>
</reference>
<reference key="3">
    <citation type="journal article" date="1996" name="Proc. Natl. Acad. Sci. U.S.A.">
        <title>HDA1 and RPD3 are members of distinct yeast histone deacetylase complexes that regulate silencing and transcription.</title>
        <authorList>
            <person name="Rundlett S.E."/>
            <person name="Carmen A.A."/>
            <person name="Kobayashi R."/>
            <person name="Bavykin S."/>
            <person name="Turner B.M."/>
            <person name="Grunstein M."/>
        </authorList>
    </citation>
    <scope>GENE NAME</scope>
</reference>
<reference key="4">
    <citation type="journal article" date="1999" name="Proc. Natl. Acad. Sci. U.S.A.">
        <title>Yeast HOS3 forms a novel trichostatin A-insensitive homodimer with intrinsic histone deacetylase activity.</title>
        <authorList>
            <person name="Carmen A.A."/>
            <person name="Griffin P.R."/>
            <person name="Calaycay J.R."/>
            <person name="Rundlett S.E."/>
            <person name="Suka Y."/>
            <person name="Grunstein M."/>
        </authorList>
    </citation>
    <scope>CHARACTERIZATION</scope>
    <scope>HOMODIMERIZATION</scope>
    <scope>CATALYTIC ACTIVITY</scope>
    <scope>SUBCELLULAR LOCATION</scope>
</reference>
<reference key="5">
    <citation type="journal article" date="2003" name="Nature">
        <title>Global analysis of protein expression in yeast.</title>
        <authorList>
            <person name="Ghaemmaghami S."/>
            <person name="Huh W.-K."/>
            <person name="Bower K."/>
            <person name="Howson R.W."/>
            <person name="Belle A."/>
            <person name="Dephoure N."/>
            <person name="O'Shea E.K."/>
            <person name="Weissman J.S."/>
        </authorList>
    </citation>
    <scope>LEVEL OF PROTEIN EXPRESSION [LARGE SCALE ANALYSIS]</scope>
</reference>
<reference key="6">
    <citation type="journal article" date="2007" name="Proc. Natl. Acad. Sci. U.S.A.">
        <title>Analysis of phosphorylation sites on proteins from Saccharomyces cerevisiae by electron transfer dissociation (ETD) mass spectrometry.</title>
        <authorList>
            <person name="Chi A."/>
            <person name="Huttenhower C."/>
            <person name="Geer L.Y."/>
            <person name="Coon J.J."/>
            <person name="Syka J.E.P."/>
            <person name="Bai D.L."/>
            <person name="Shabanowitz J."/>
            <person name="Burke D.J."/>
            <person name="Troyanskaya O.G."/>
            <person name="Hunt D.F."/>
        </authorList>
    </citation>
    <scope>PHOSPHORYLATION [LARGE SCALE ANALYSIS] AT SER-629</scope>
    <scope>IDENTIFICATION BY MASS SPECTROMETRY [LARGE SCALE ANALYSIS]</scope>
</reference>
<reference key="7">
    <citation type="journal article" date="2008" name="Mol. Cell. Proteomics">
        <title>A multidimensional chromatography technology for in-depth phosphoproteome analysis.</title>
        <authorList>
            <person name="Albuquerque C.P."/>
            <person name="Smolka M.B."/>
            <person name="Payne S.H."/>
            <person name="Bafna V."/>
            <person name="Eng J."/>
            <person name="Zhou H."/>
        </authorList>
    </citation>
    <scope>PHOSPHORYLATION [LARGE SCALE ANALYSIS] AT SER-629</scope>
    <scope>IDENTIFICATION BY MASS SPECTROMETRY [LARGE SCALE ANALYSIS]</scope>
</reference>
<reference key="8">
    <citation type="journal article" date="2009" name="Science">
        <title>Global analysis of Cdk1 substrate phosphorylation sites provides insights into evolution.</title>
        <authorList>
            <person name="Holt L.J."/>
            <person name="Tuch B.B."/>
            <person name="Villen J."/>
            <person name="Johnson A.D."/>
            <person name="Gygi S.P."/>
            <person name="Morgan D.O."/>
        </authorList>
    </citation>
    <scope>PHOSPHORYLATION [LARGE SCALE ANALYSIS] AT SER-582; SER-583 AND SER-613</scope>
    <scope>IDENTIFICATION BY MASS SPECTROMETRY [LARGE SCALE ANALYSIS]</scope>
</reference>
<accession>Q02959</accession>
<accession>D6W3Q2</accession>
<name>HOS3_YEAST</name>
<dbReference type="EC" id="3.5.1.98" evidence="3"/>
<dbReference type="EMBL" id="U43503">
    <property type="protein sequence ID" value="AAB68246.1"/>
    <property type="molecule type" value="Genomic_DNA"/>
</dbReference>
<dbReference type="EMBL" id="BK006949">
    <property type="protein sequence ID" value="DAA11318.1"/>
    <property type="molecule type" value="Genomic_DNA"/>
</dbReference>
<dbReference type="PIR" id="S62006">
    <property type="entry name" value="S62006"/>
</dbReference>
<dbReference type="RefSeq" id="NP_015209.1">
    <property type="nucleotide sequence ID" value="NM_001183930.1"/>
</dbReference>
<dbReference type="PDB" id="7WJL">
    <property type="method" value="X-ray"/>
    <property type="resolution" value="2.40 A"/>
    <property type="chains" value="A=34-510"/>
</dbReference>
<dbReference type="PDBsum" id="7WJL"/>
<dbReference type="SMR" id="Q02959"/>
<dbReference type="BioGRID" id="36065">
    <property type="interactions" value="122"/>
</dbReference>
<dbReference type="DIP" id="DIP-8047N"/>
<dbReference type="FunCoup" id="Q02959">
    <property type="interactions" value="243"/>
</dbReference>
<dbReference type="IntAct" id="Q02959">
    <property type="interactions" value="53"/>
</dbReference>
<dbReference type="MINT" id="Q02959"/>
<dbReference type="STRING" id="4932.YPL116W"/>
<dbReference type="GlyGen" id="Q02959">
    <property type="glycosylation" value="2 sites, 1 O-linked glycan (2 sites)"/>
</dbReference>
<dbReference type="iPTMnet" id="Q02959"/>
<dbReference type="PaxDb" id="4932-YPL116W"/>
<dbReference type="PeptideAtlas" id="Q02959"/>
<dbReference type="EnsemblFungi" id="YPL116W_mRNA">
    <property type="protein sequence ID" value="YPL116W"/>
    <property type="gene ID" value="YPL116W"/>
</dbReference>
<dbReference type="GeneID" id="855987"/>
<dbReference type="KEGG" id="sce:YPL116W"/>
<dbReference type="AGR" id="SGD:S000006037"/>
<dbReference type="SGD" id="S000006037">
    <property type="gene designation" value="HOS3"/>
</dbReference>
<dbReference type="VEuPathDB" id="FungiDB:YPL116W"/>
<dbReference type="eggNOG" id="KOG1343">
    <property type="taxonomic scope" value="Eukaryota"/>
</dbReference>
<dbReference type="HOGENOM" id="CLU_024583_0_0_1"/>
<dbReference type="InParanoid" id="Q02959"/>
<dbReference type="OMA" id="GTQDICW"/>
<dbReference type="OrthoDB" id="5232919at2759"/>
<dbReference type="BioCyc" id="YEAST:G3O-34016-MONOMER"/>
<dbReference type="BioGRID-ORCS" id="855987">
    <property type="hits" value="8 hits in 10 CRISPR screens"/>
</dbReference>
<dbReference type="PRO" id="PR:Q02959"/>
<dbReference type="Proteomes" id="UP000002311">
    <property type="component" value="Chromosome XVI"/>
</dbReference>
<dbReference type="RNAct" id="Q02959">
    <property type="molecule type" value="protein"/>
</dbReference>
<dbReference type="GO" id="GO:0005935">
    <property type="term" value="C:cellular bud neck"/>
    <property type="evidence" value="ECO:0007005"/>
    <property type="project" value="SGD"/>
</dbReference>
<dbReference type="GO" id="GO:0005737">
    <property type="term" value="C:cytoplasm"/>
    <property type="evidence" value="ECO:0007005"/>
    <property type="project" value="SGD"/>
</dbReference>
<dbReference type="GO" id="GO:0005634">
    <property type="term" value="C:nucleus"/>
    <property type="evidence" value="ECO:0007005"/>
    <property type="project" value="SGD"/>
</dbReference>
<dbReference type="GO" id="GO:0005628">
    <property type="term" value="C:prospore membrane"/>
    <property type="evidence" value="ECO:0007005"/>
    <property type="project" value="SGD"/>
</dbReference>
<dbReference type="GO" id="GO:0004407">
    <property type="term" value="F:histone deacetylase activity"/>
    <property type="evidence" value="ECO:0000314"/>
    <property type="project" value="SGD"/>
</dbReference>
<dbReference type="GO" id="GO:0141221">
    <property type="term" value="F:histone deacetylase activity, hydrolytic mechanism"/>
    <property type="evidence" value="ECO:0007669"/>
    <property type="project" value="UniProtKB-EC"/>
</dbReference>
<dbReference type="GO" id="GO:0006325">
    <property type="term" value="P:chromatin organization"/>
    <property type="evidence" value="ECO:0007669"/>
    <property type="project" value="UniProtKB-KW"/>
</dbReference>
<dbReference type="GO" id="GO:0000082">
    <property type="term" value="P:G1/S transition of mitotic cell cycle"/>
    <property type="evidence" value="ECO:0000316"/>
    <property type="project" value="SGD"/>
</dbReference>
<dbReference type="GO" id="GO:0045944">
    <property type="term" value="P:positive regulation of transcription by RNA polymerase II"/>
    <property type="evidence" value="ECO:0000315"/>
    <property type="project" value="SGD"/>
</dbReference>
<dbReference type="GO" id="GO:0006357">
    <property type="term" value="P:regulation of transcription by RNA polymerase II"/>
    <property type="evidence" value="ECO:0000316"/>
    <property type="project" value="SGD"/>
</dbReference>
<dbReference type="CDD" id="cd09998">
    <property type="entry name" value="HDAC_Hos3"/>
    <property type="match status" value="1"/>
</dbReference>
<dbReference type="FunFam" id="3.40.800.20:FF:000011">
    <property type="entry name" value="Histone deacetylase HOS3"/>
    <property type="match status" value="1"/>
</dbReference>
<dbReference type="Gene3D" id="3.40.800.20">
    <property type="entry name" value="Histone deacetylase domain"/>
    <property type="match status" value="1"/>
</dbReference>
<dbReference type="InterPro" id="IPR053244">
    <property type="entry name" value="HDAC_HD_type_1"/>
</dbReference>
<dbReference type="InterPro" id="IPR000286">
    <property type="entry name" value="His_deacetylse"/>
</dbReference>
<dbReference type="InterPro" id="IPR023801">
    <property type="entry name" value="His_deacetylse_dom"/>
</dbReference>
<dbReference type="InterPro" id="IPR037138">
    <property type="entry name" value="His_deacetylse_dom_sf"/>
</dbReference>
<dbReference type="InterPro" id="IPR023696">
    <property type="entry name" value="Ureohydrolase_dom_sf"/>
</dbReference>
<dbReference type="PANTHER" id="PTHR47558">
    <property type="entry name" value="HISTONE DEACETYLASE HOS3"/>
    <property type="match status" value="1"/>
</dbReference>
<dbReference type="PANTHER" id="PTHR47558:SF1">
    <property type="entry name" value="HISTONE DEACETYLASE HOS3"/>
    <property type="match status" value="1"/>
</dbReference>
<dbReference type="Pfam" id="PF00850">
    <property type="entry name" value="Hist_deacetyl"/>
    <property type="match status" value="1"/>
</dbReference>
<dbReference type="PRINTS" id="PR01270">
    <property type="entry name" value="HDASUPER"/>
</dbReference>
<dbReference type="SUPFAM" id="SSF52768">
    <property type="entry name" value="Arginase/deacetylase"/>
    <property type="match status" value="1"/>
</dbReference>
<sequence length="697" mass="79200">MSSKHSDPLERFYKQFQAFVQNNPNVISAARAAAQIPESAKAVVVLSPYSLQHVFPREWVTKSYRKTIVERPERLLASSMGISAAITMYPSLFTLKSSHQRKGSLMAPHVLKVHGSSWPAELIELCQMADAKLLKGEIEVPDTWNSGDIYLSSKTIKALQGTIGAIETGVDSIFKGPSAEHISNRAFVAIRPPGHHCHYGTPSGFCLLNNAHVAIEYAYDTYNVTHVVVLDFDLHHGDGTQDICWKRAGFKPEEEPEDSSYDDFGKKFAEFPKVGYFSMHDINSFPTESGFATKENIKNASTCIMNSHDLNIWNIHLSKWTTEEEFNVLYRTKYRTLFAKADEFFRSAKLEMNQQGRPFKGLVVISAGFDASEFEQTSMQRHSVNVPTSFYTTFTKDALKLAQMHCHGKVLSLMEGGYSDKAICSGVFAHLIGLQNQDWVKEWGSEQVVKEIVRGCKPAWKPYKTKRAKDVIRIWAEEVIRLGRAMIPEFDDIIFKDAVNSAPSNSLLKATVEPASTSTIAQRIIRSHRSNASPEKELHENKPRSTEKQEQREIRSDTKVKQLSSNNRAAETQIPFLQQEFSSEDEDEEYVYDEELNKTFNRTVEDITIDDISRHLETLEIEKKGDEDSDHELKEKNWKNSHQRRLQGNGMYKIPSNTKPHRIRQPQNANTPTYDDSDISMISHVSRKHTTRSGGRW</sequence>
<keyword id="KW-0002">3D-structure</keyword>
<keyword id="KW-0156">Chromatin regulator</keyword>
<keyword id="KW-0378">Hydrolase</keyword>
<keyword id="KW-0539">Nucleus</keyword>
<keyword id="KW-0597">Phosphoprotein</keyword>
<keyword id="KW-1185">Reference proteome</keyword>
<keyword id="KW-0678">Repressor</keyword>
<keyword id="KW-0804">Transcription</keyword>
<keyword id="KW-0805">Transcription regulation</keyword>
<gene>
    <name type="primary">HOS3</name>
    <name type="ordered locus">YPL116W</name>
    <name type="ORF">LPH11W</name>
</gene>
<organism>
    <name type="scientific">Saccharomyces cerevisiae (strain ATCC 204508 / S288c)</name>
    <name type="common">Baker's yeast</name>
    <dbReference type="NCBI Taxonomy" id="559292"/>
    <lineage>
        <taxon>Eukaryota</taxon>
        <taxon>Fungi</taxon>
        <taxon>Dikarya</taxon>
        <taxon>Ascomycota</taxon>
        <taxon>Saccharomycotina</taxon>
        <taxon>Saccharomycetes</taxon>
        <taxon>Saccharomycetales</taxon>
        <taxon>Saccharomycetaceae</taxon>
        <taxon>Saccharomyces</taxon>
    </lineage>
</organism>
<protein>
    <recommendedName>
        <fullName>Histone deacetylase HOS3</fullName>
        <ecNumber evidence="3">3.5.1.98</ecNumber>
    </recommendedName>
</protein>